<dbReference type="EMBL" id="CP000628">
    <property type="protein sequence ID" value="ACM26233.1"/>
    <property type="molecule type" value="Genomic_DNA"/>
</dbReference>
<dbReference type="RefSeq" id="WP_012651247.1">
    <property type="nucleotide sequence ID" value="NC_011985.1"/>
</dbReference>
<dbReference type="STRING" id="311403.Arad_1912"/>
<dbReference type="KEGG" id="ara:Arad_1912"/>
<dbReference type="eggNOG" id="COG3811">
    <property type="taxonomic scope" value="Bacteria"/>
</dbReference>
<dbReference type="HOGENOM" id="CLU_164736_0_0_5"/>
<dbReference type="Proteomes" id="UP000001600">
    <property type="component" value="Chromosome 1"/>
</dbReference>
<dbReference type="HAMAP" id="MF_00827">
    <property type="entry name" value="UPF0386"/>
    <property type="match status" value="1"/>
</dbReference>
<dbReference type="InterPro" id="IPR018654">
    <property type="entry name" value="YjhX_toxin"/>
</dbReference>
<dbReference type="NCBIfam" id="NF010240">
    <property type="entry name" value="PRK13687.1"/>
    <property type="match status" value="1"/>
</dbReference>
<dbReference type="Pfam" id="PF09857">
    <property type="entry name" value="YjhX_toxin"/>
    <property type="match status" value="1"/>
</dbReference>
<reference key="1">
    <citation type="journal article" date="2009" name="J. Bacteriol.">
        <title>Genome sequences of three Agrobacterium biovars help elucidate the evolution of multichromosome genomes in bacteria.</title>
        <authorList>
            <person name="Slater S.C."/>
            <person name="Goldman B.S."/>
            <person name="Goodner B."/>
            <person name="Setubal J.C."/>
            <person name="Farrand S.K."/>
            <person name="Nester E.W."/>
            <person name="Burr T.J."/>
            <person name="Banta L."/>
            <person name="Dickerman A.W."/>
            <person name="Paulsen I."/>
            <person name="Otten L."/>
            <person name="Suen G."/>
            <person name="Welch R."/>
            <person name="Almeida N.F."/>
            <person name="Arnold F."/>
            <person name="Burton O.T."/>
            <person name="Du Z."/>
            <person name="Ewing A."/>
            <person name="Godsy E."/>
            <person name="Heisel S."/>
            <person name="Houmiel K.L."/>
            <person name="Jhaveri J."/>
            <person name="Lu J."/>
            <person name="Miller N.M."/>
            <person name="Norton S."/>
            <person name="Chen Q."/>
            <person name="Phoolcharoen W."/>
            <person name="Ohlin V."/>
            <person name="Ondrusek D."/>
            <person name="Pride N."/>
            <person name="Stricklin S.L."/>
            <person name="Sun J."/>
            <person name="Wheeler C."/>
            <person name="Wilson L."/>
            <person name="Zhu H."/>
            <person name="Wood D.W."/>
        </authorList>
    </citation>
    <scope>NUCLEOTIDE SEQUENCE [LARGE SCALE GENOMIC DNA]</scope>
    <source>
        <strain>K84 / ATCC BAA-868</strain>
    </source>
</reference>
<organism>
    <name type="scientific">Rhizobium rhizogenes (strain K84 / ATCC BAA-868)</name>
    <name type="common">Agrobacterium radiobacter</name>
    <dbReference type="NCBI Taxonomy" id="311403"/>
    <lineage>
        <taxon>Bacteria</taxon>
        <taxon>Pseudomonadati</taxon>
        <taxon>Pseudomonadota</taxon>
        <taxon>Alphaproteobacteria</taxon>
        <taxon>Hyphomicrobiales</taxon>
        <taxon>Rhizobiaceae</taxon>
        <taxon>Rhizobium/Agrobacterium group</taxon>
        <taxon>Rhizobium</taxon>
    </lineage>
</organism>
<name>Y1912_RHIR8</name>
<accession>B9JDN2</accession>
<comment type="similarity">
    <text evidence="1">Belongs to the UPF0386 family.</text>
</comment>
<sequence>MDISRAEQRILHLLAQGGRIEIIRSETKKIEAASCFTRDGWLYPGFDLTLFRKLKHLKAIKSSGGHPYRITERGLRLVRAQLDNR</sequence>
<evidence type="ECO:0000255" key="1">
    <source>
        <dbReference type="HAMAP-Rule" id="MF_00827"/>
    </source>
</evidence>
<feature type="chain" id="PRO_1000148767" description="UPF0386 protein Arad_1912">
    <location>
        <begin position="1"/>
        <end position="85"/>
    </location>
</feature>
<gene>
    <name type="ordered locus">Arad_1912</name>
</gene>
<proteinExistence type="inferred from homology"/>
<protein>
    <recommendedName>
        <fullName evidence="1">UPF0386 protein Arad_1912</fullName>
    </recommendedName>
</protein>